<name>PURL_METKA</name>
<comment type="function">
    <text evidence="1">Part of the phosphoribosylformylglycinamidine synthase complex involved in the purines biosynthetic pathway. Catalyzes the ATP-dependent conversion of formylglycinamide ribonucleotide (FGAR) and glutamine to yield formylglycinamidine ribonucleotide (FGAM) and glutamate. The FGAM synthase complex is composed of three subunits. PurQ produces an ammonia molecule by converting glutamine to glutamate. PurL transfers the ammonia molecule to FGAR to form FGAM in an ATP-dependent manner. PurS interacts with PurQ and PurL and is thought to assist in the transfer of the ammonia molecule from PurQ to PurL.</text>
</comment>
<comment type="catalytic activity">
    <reaction evidence="1">
        <text>N(2)-formyl-N(1)-(5-phospho-beta-D-ribosyl)glycinamide + L-glutamine + ATP + H2O = 2-formamido-N(1)-(5-O-phospho-beta-D-ribosyl)acetamidine + L-glutamate + ADP + phosphate + H(+)</text>
        <dbReference type="Rhea" id="RHEA:17129"/>
        <dbReference type="ChEBI" id="CHEBI:15377"/>
        <dbReference type="ChEBI" id="CHEBI:15378"/>
        <dbReference type="ChEBI" id="CHEBI:29985"/>
        <dbReference type="ChEBI" id="CHEBI:30616"/>
        <dbReference type="ChEBI" id="CHEBI:43474"/>
        <dbReference type="ChEBI" id="CHEBI:58359"/>
        <dbReference type="ChEBI" id="CHEBI:147286"/>
        <dbReference type="ChEBI" id="CHEBI:147287"/>
        <dbReference type="ChEBI" id="CHEBI:456216"/>
        <dbReference type="EC" id="6.3.5.3"/>
    </reaction>
</comment>
<comment type="pathway">
    <text evidence="1">Purine metabolism; IMP biosynthesis via de novo pathway; 5-amino-1-(5-phospho-D-ribosyl)imidazole from N(2)-formyl-N(1)-(5-phospho-D-ribosyl)glycinamide: step 1/2.</text>
</comment>
<comment type="subunit">
    <text evidence="1">Monomer. Part of the FGAM synthase complex composed of 1 PurL, 1 PurQ and 2 PurS subunits.</text>
</comment>
<comment type="subcellular location">
    <subcellularLocation>
        <location evidence="1">Cytoplasm</location>
    </subcellularLocation>
</comment>
<comment type="similarity">
    <text evidence="1">Belongs to the FGAMS family.</text>
</comment>
<reference key="1">
    <citation type="journal article" date="2002" name="Proc. Natl. Acad. Sci. U.S.A.">
        <title>The complete genome of hyperthermophile Methanopyrus kandleri AV19 and monophyly of archaeal methanogens.</title>
        <authorList>
            <person name="Slesarev A.I."/>
            <person name="Mezhevaya K.V."/>
            <person name="Makarova K.S."/>
            <person name="Polushin N.N."/>
            <person name="Shcherbinina O.V."/>
            <person name="Shakhova V.V."/>
            <person name="Belova G.I."/>
            <person name="Aravind L."/>
            <person name="Natale D.A."/>
            <person name="Rogozin I.B."/>
            <person name="Tatusov R.L."/>
            <person name="Wolf Y.I."/>
            <person name="Stetter K.O."/>
            <person name="Malykh A.G."/>
            <person name="Koonin E.V."/>
            <person name="Kozyavkin S.A."/>
        </authorList>
    </citation>
    <scope>NUCLEOTIDE SEQUENCE [LARGE SCALE GENOMIC DNA]</scope>
    <source>
        <strain>AV19 / DSM 6324 / JCM 9639 / NBRC 100938</strain>
    </source>
</reference>
<accession>Q8TY09</accession>
<evidence type="ECO:0000255" key="1">
    <source>
        <dbReference type="HAMAP-Rule" id="MF_00420"/>
    </source>
</evidence>
<gene>
    <name evidence="1" type="primary">purL</name>
    <name type="synonym">purL_2</name>
    <name type="ordered locus">MK0497</name>
</gene>
<organism>
    <name type="scientific">Methanopyrus kandleri (strain AV19 / DSM 6324 / JCM 9639 / NBRC 100938)</name>
    <dbReference type="NCBI Taxonomy" id="190192"/>
    <lineage>
        <taxon>Archaea</taxon>
        <taxon>Methanobacteriati</taxon>
        <taxon>Methanobacteriota</taxon>
        <taxon>Methanomada group</taxon>
        <taxon>Methanopyri</taxon>
        <taxon>Methanopyrales</taxon>
        <taxon>Methanopyraceae</taxon>
        <taxon>Methanopyrus</taxon>
    </lineage>
</organism>
<protein>
    <recommendedName>
        <fullName evidence="1">Phosphoribosylformylglycinamidine synthase subunit PurL</fullName>
        <shortName evidence="1">FGAM synthase</shortName>
        <ecNumber evidence="1">6.3.5.3</ecNumber>
    </recommendedName>
    <alternativeName>
        <fullName evidence="1">Formylglycinamide ribonucleotide amidotransferase subunit II</fullName>
        <shortName evidence="1">FGAR amidotransferase II</shortName>
        <shortName evidence="1">FGAR-AT II</shortName>
    </alternativeName>
    <alternativeName>
        <fullName evidence="1">Glutamine amidotransferase PurL</fullName>
    </alternativeName>
    <alternativeName>
        <fullName evidence="1">Phosphoribosylformylglycinamidine synthase subunit II</fullName>
    </alternativeName>
</protein>
<proteinExistence type="inferred from homology"/>
<feature type="chain" id="PRO_0000100514" description="Phosphoribosylformylglycinamidine synthase subunit PurL">
    <location>
        <begin position="1"/>
        <end position="724"/>
    </location>
</feature>
<feature type="active site" evidence="1">
    <location>
        <position position="34"/>
    </location>
</feature>
<feature type="active site" description="Proton acceptor" evidence="1">
    <location>
        <position position="80"/>
    </location>
</feature>
<feature type="binding site" evidence="1">
    <location>
        <position position="37"/>
    </location>
    <ligand>
        <name>ATP</name>
        <dbReference type="ChEBI" id="CHEBI:30616"/>
    </ligand>
</feature>
<feature type="binding site" evidence="1">
    <location>
        <position position="78"/>
    </location>
    <ligand>
        <name>Mg(2+)</name>
        <dbReference type="ChEBI" id="CHEBI:18420"/>
        <label>1</label>
    </ligand>
</feature>
<feature type="binding site" evidence="1">
    <location>
        <begin position="79"/>
        <end position="82"/>
    </location>
    <ligand>
        <name>substrate</name>
    </ligand>
</feature>
<feature type="binding site" evidence="1">
    <location>
        <position position="101"/>
    </location>
    <ligand>
        <name>substrate</name>
    </ligand>
</feature>
<feature type="binding site" evidence="1">
    <location>
        <position position="102"/>
    </location>
    <ligand>
        <name>Mg(2+)</name>
        <dbReference type="ChEBI" id="CHEBI:18420"/>
        <label>2</label>
    </ligand>
</feature>
<feature type="binding site" evidence="1">
    <location>
        <position position="226"/>
    </location>
    <ligand>
        <name>substrate</name>
    </ligand>
</feature>
<feature type="binding site" evidence="1">
    <location>
        <position position="254"/>
    </location>
    <ligand>
        <name>Mg(2+)</name>
        <dbReference type="ChEBI" id="CHEBI:18420"/>
        <label>2</label>
    </ligand>
</feature>
<feature type="binding site" evidence="1">
    <location>
        <begin position="298"/>
        <end position="300"/>
    </location>
    <ligand>
        <name>substrate</name>
    </ligand>
</feature>
<feature type="binding site" evidence="1">
    <location>
        <position position="480"/>
    </location>
    <ligand>
        <name>ATP</name>
        <dbReference type="ChEBI" id="CHEBI:30616"/>
    </ligand>
</feature>
<feature type="binding site" evidence="1">
    <location>
        <position position="517"/>
    </location>
    <ligand>
        <name>ATP</name>
        <dbReference type="ChEBI" id="CHEBI:30616"/>
    </ligand>
</feature>
<feature type="binding site" evidence="1">
    <location>
        <position position="518"/>
    </location>
    <ligand>
        <name>Mg(2+)</name>
        <dbReference type="ChEBI" id="CHEBI:18420"/>
        <label>1</label>
    </ligand>
</feature>
<feature type="binding site" evidence="1">
    <location>
        <position position="520"/>
    </location>
    <ligand>
        <name>substrate</name>
    </ligand>
</feature>
<keyword id="KW-0067">ATP-binding</keyword>
<keyword id="KW-0963">Cytoplasm</keyword>
<keyword id="KW-0436">Ligase</keyword>
<keyword id="KW-0460">Magnesium</keyword>
<keyword id="KW-0479">Metal-binding</keyword>
<keyword id="KW-0547">Nucleotide-binding</keyword>
<keyword id="KW-0658">Purine biosynthesis</keyword>
<keyword id="KW-1185">Reference proteome</keyword>
<dbReference type="EC" id="6.3.5.3" evidence="1"/>
<dbReference type="EMBL" id="AE009439">
    <property type="protein sequence ID" value="AAM01712.1"/>
    <property type="molecule type" value="Genomic_DNA"/>
</dbReference>
<dbReference type="RefSeq" id="WP_011018867.1">
    <property type="nucleotide sequence ID" value="NC_003551.1"/>
</dbReference>
<dbReference type="SMR" id="Q8TY09"/>
<dbReference type="FunCoup" id="Q8TY09">
    <property type="interactions" value="220"/>
</dbReference>
<dbReference type="STRING" id="190192.MK0497"/>
<dbReference type="PaxDb" id="190192-MK0497"/>
<dbReference type="EnsemblBacteria" id="AAM01712">
    <property type="protein sequence ID" value="AAM01712"/>
    <property type="gene ID" value="MK0497"/>
</dbReference>
<dbReference type="GeneID" id="1476598"/>
<dbReference type="KEGG" id="mka:MK0497"/>
<dbReference type="PATRIC" id="fig|190192.8.peg.527"/>
<dbReference type="HOGENOM" id="CLU_003100_0_1_2"/>
<dbReference type="InParanoid" id="Q8TY09"/>
<dbReference type="UniPathway" id="UPA00074">
    <property type="reaction ID" value="UER00128"/>
</dbReference>
<dbReference type="Proteomes" id="UP000001826">
    <property type="component" value="Chromosome"/>
</dbReference>
<dbReference type="GO" id="GO:0005737">
    <property type="term" value="C:cytoplasm"/>
    <property type="evidence" value="ECO:0007669"/>
    <property type="project" value="UniProtKB-SubCell"/>
</dbReference>
<dbReference type="GO" id="GO:0005524">
    <property type="term" value="F:ATP binding"/>
    <property type="evidence" value="ECO:0007669"/>
    <property type="project" value="UniProtKB-UniRule"/>
</dbReference>
<dbReference type="GO" id="GO:0000287">
    <property type="term" value="F:magnesium ion binding"/>
    <property type="evidence" value="ECO:0007669"/>
    <property type="project" value="UniProtKB-UniRule"/>
</dbReference>
<dbReference type="GO" id="GO:0004642">
    <property type="term" value="F:phosphoribosylformylglycinamidine synthase activity"/>
    <property type="evidence" value="ECO:0007669"/>
    <property type="project" value="UniProtKB-UniRule"/>
</dbReference>
<dbReference type="GO" id="GO:0006189">
    <property type="term" value="P:'de novo' IMP biosynthetic process"/>
    <property type="evidence" value="ECO:0007669"/>
    <property type="project" value="UniProtKB-UniRule"/>
</dbReference>
<dbReference type="CDD" id="cd02203">
    <property type="entry name" value="PurL_repeat1"/>
    <property type="match status" value="1"/>
</dbReference>
<dbReference type="CDD" id="cd02204">
    <property type="entry name" value="PurL_repeat2"/>
    <property type="match status" value="1"/>
</dbReference>
<dbReference type="FunFam" id="3.30.1330.10:FF:000004">
    <property type="entry name" value="Phosphoribosylformylglycinamidine synthase subunit PurL"/>
    <property type="match status" value="1"/>
</dbReference>
<dbReference type="Gene3D" id="3.90.650.10">
    <property type="entry name" value="PurM-like C-terminal domain"/>
    <property type="match status" value="2"/>
</dbReference>
<dbReference type="Gene3D" id="3.30.1330.10">
    <property type="entry name" value="PurM-like, N-terminal domain"/>
    <property type="match status" value="2"/>
</dbReference>
<dbReference type="HAMAP" id="MF_00420">
    <property type="entry name" value="PurL_2"/>
    <property type="match status" value="1"/>
</dbReference>
<dbReference type="InterPro" id="IPR010074">
    <property type="entry name" value="PRibForGlyAmidine_synth_PurL"/>
</dbReference>
<dbReference type="InterPro" id="IPR041609">
    <property type="entry name" value="PurL_linker"/>
</dbReference>
<dbReference type="InterPro" id="IPR010918">
    <property type="entry name" value="PurM-like_C_dom"/>
</dbReference>
<dbReference type="InterPro" id="IPR036676">
    <property type="entry name" value="PurM-like_C_sf"/>
</dbReference>
<dbReference type="InterPro" id="IPR016188">
    <property type="entry name" value="PurM-like_N"/>
</dbReference>
<dbReference type="InterPro" id="IPR036921">
    <property type="entry name" value="PurM-like_N_sf"/>
</dbReference>
<dbReference type="NCBIfam" id="TIGR01736">
    <property type="entry name" value="FGAM_synth_II"/>
    <property type="match status" value="1"/>
</dbReference>
<dbReference type="NCBIfam" id="NF002290">
    <property type="entry name" value="PRK01213.1"/>
    <property type="match status" value="1"/>
</dbReference>
<dbReference type="PANTHER" id="PTHR43555">
    <property type="entry name" value="PHOSPHORIBOSYLFORMYLGLYCINAMIDINE SYNTHASE SUBUNIT PURL"/>
    <property type="match status" value="1"/>
</dbReference>
<dbReference type="PANTHER" id="PTHR43555:SF1">
    <property type="entry name" value="PHOSPHORIBOSYLFORMYLGLYCINAMIDINE SYNTHASE SUBUNIT PURL"/>
    <property type="match status" value="1"/>
</dbReference>
<dbReference type="Pfam" id="PF00586">
    <property type="entry name" value="AIRS"/>
    <property type="match status" value="2"/>
</dbReference>
<dbReference type="Pfam" id="PF02769">
    <property type="entry name" value="AIRS_C"/>
    <property type="match status" value="2"/>
</dbReference>
<dbReference type="Pfam" id="PF18072">
    <property type="entry name" value="FGAR-AT_linker"/>
    <property type="match status" value="1"/>
</dbReference>
<dbReference type="PIRSF" id="PIRSF001587">
    <property type="entry name" value="FGAM_synthase_II"/>
    <property type="match status" value="1"/>
</dbReference>
<dbReference type="SUPFAM" id="SSF56042">
    <property type="entry name" value="PurM C-terminal domain-like"/>
    <property type="match status" value="2"/>
</dbReference>
<dbReference type="SUPFAM" id="SSF55326">
    <property type="entry name" value="PurM N-terminal domain-like"/>
    <property type="match status" value="2"/>
</dbReference>
<sequence length="724" mass="78777">MTLDERDLELIREELGRDPNATERAMFENMWSEHCAYRSTRHLLRQLPSEADHVIVGPGDDAAVVAIDDEWAVVVGIESHNHPSYVDPYNGAATGVGGIVRDVLSMGAFPIALLDPLRFGPLDGERVPYLVDGVVRGISDYGNRIGVPTVGGELEFDPSYERNPLVNVMCVGIVRRSEIVRGRADRPGDVLVLVGARTGRDGIGGAAFASEELGEESEEEDRPAVQIGDPFTERQLIIAIREAVERGLVKGCKDLGAAGLTCAATEMAADGGTGVEIDVFKVPLREEGMEPWEIMLSESQERMLLVVAPEDVDEVIEICRKYGLEASVVGRVTDDGYLTVKDGDDVIARVPAEFLADGAPEVEWEEEPYSYPENVDVPEPDPEDLVRSVLSSPNVSPALREWVYRQYDHEVQGRTVVKPGHDAAVMWLQHEGLEDVALALTTDSNPRHVLIDPKTGTEGCVAEALRNLATVGAEPLCLVDCLNFGSPENPRVYYQLRRSIEGLGKAAREFEVPVVGGNVSLYNEHEVDGPVNPTPVIGAVGVIRGLDYLEDFPREPEEGEAVIVLGETREELGGSLYLIEYHGIKGGKVPRVRYREERALHDLLRRIARKNMVSSVTDVSTGGLLAAVAELLGPVGASLSLSEVPNSVSRWDFLLLSESHGRAIVTTDRPDDVLGAAEEAGVPAQVVGEVTGDGVLRISVGPVDVSLDREELEELWRSPLHYLE</sequence>